<comment type="function">
    <text evidence="1">Catalyzes the N-acylation of UDP-3-O-acylglucosamine using 3-hydroxyacyl-ACP as the acyl donor. Is involved in the biosynthesis of lipid A, a phosphorylated glycolipid that anchors the lipopolysaccharide to the outer membrane of the cell.</text>
</comment>
<comment type="catalytic activity">
    <reaction evidence="1">
        <text>a UDP-3-O-[(3R)-3-hydroxyacyl]-alpha-D-glucosamine + a (3R)-hydroxyacyl-[ACP] = a UDP-2-N,3-O-bis[(3R)-3-hydroxyacyl]-alpha-D-glucosamine + holo-[ACP] + H(+)</text>
        <dbReference type="Rhea" id="RHEA:53836"/>
        <dbReference type="Rhea" id="RHEA-COMP:9685"/>
        <dbReference type="Rhea" id="RHEA-COMP:9945"/>
        <dbReference type="ChEBI" id="CHEBI:15378"/>
        <dbReference type="ChEBI" id="CHEBI:64479"/>
        <dbReference type="ChEBI" id="CHEBI:78827"/>
        <dbReference type="ChEBI" id="CHEBI:137740"/>
        <dbReference type="ChEBI" id="CHEBI:137748"/>
        <dbReference type="EC" id="2.3.1.191"/>
    </reaction>
</comment>
<comment type="pathway">
    <text evidence="1">Bacterial outer membrane biogenesis; LPS lipid A biosynthesis.</text>
</comment>
<comment type="subunit">
    <text evidence="1">Homotrimer.</text>
</comment>
<comment type="similarity">
    <text evidence="1">Belongs to the transferase hexapeptide repeat family. LpxD subfamily.</text>
</comment>
<dbReference type="EC" id="2.3.1.191" evidence="1"/>
<dbReference type="EMBL" id="AP009552">
    <property type="protein sequence ID" value="BAG01290.1"/>
    <property type="molecule type" value="Genomic_DNA"/>
</dbReference>
<dbReference type="RefSeq" id="WP_002798603.1">
    <property type="nucleotide sequence ID" value="NC_010296.1"/>
</dbReference>
<dbReference type="SMR" id="B0JUA2"/>
<dbReference type="STRING" id="449447.MAE_14680"/>
<dbReference type="PaxDb" id="449447-MAE_14680"/>
<dbReference type="EnsemblBacteria" id="BAG01290">
    <property type="protein sequence ID" value="BAG01290"/>
    <property type="gene ID" value="MAE_14680"/>
</dbReference>
<dbReference type="KEGG" id="mar:MAE_14680"/>
<dbReference type="eggNOG" id="COG1044">
    <property type="taxonomic scope" value="Bacteria"/>
</dbReference>
<dbReference type="HOGENOM" id="CLU_049865_0_0_3"/>
<dbReference type="BioCyc" id="MAER449447:MAE_RS06465-MONOMER"/>
<dbReference type="UniPathway" id="UPA00973"/>
<dbReference type="Proteomes" id="UP000001510">
    <property type="component" value="Chromosome"/>
</dbReference>
<dbReference type="GO" id="GO:0031470">
    <property type="term" value="C:carboxysome"/>
    <property type="evidence" value="ECO:0007669"/>
    <property type="project" value="UniProtKB-ARBA"/>
</dbReference>
<dbReference type="GO" id="GO:0016020">
    <property type="term" value="C:membrane"/>
    <property type="evidence" value="ECO:0007669"/>
    <property type="project" value="GOC"/>
</dbReference>
<dbReference type="GO" id="GO:0016410">
    <property type="term" value="F:N-acyltransferase activity"/>
    <property type="evidence" value="ECO:0007669"/>
    <property type="project" value="InterPro"/>
</dbReference>
<dbReference type="GO" id="GO:0043886">
    <property type="term" value="F:structural constituent of carboxysome shell"/>
    <property type="evidence" value="ECO:0007669"/>
    <property type="project" value="UniProtKB-ARBA"/>
</dbReference>
<dbReference type="GO" id="GO:0009245">
    <property type="term" value="P:lipid A biosynthetic process"/>
    <property type="evidence" value="ECO:0007669"/>
    <property type="project" value="UniProtKB-UniRule"/>
</dbReference>
<dbReference type="CDD" id="cd03352">
    <property type="entry name" value="LbH_LpxD"/>
    <property type="match status" value="1"/>
</dbReference>
<dbReference type="Gene3D" id="2.160.10.10">
    <property type="entry name" value="Hexapeptide repeat proteins"/>
    <property type="match status" value="1"/>
</dbReference>
<dbReference type="Gene3D" id="3.40.1390.10">
    <property type="entry name" value="MurE/MurF, N-terminal domain"/>
    <property type="match status" value="1"/>
</dbReference>
<dbReference type="HAMAP" id="MF_00523">
    <property type="entry name" value="LpxD"/>
    <property type="match status" value="1"/>
</dbReference>
<dbReference type="InterPro" id="IPR001451">
    <property type="entry name" value="Hexapep"/>
</dbReference>
<dbReference type="InterPro" id="IPR007691">
    <property type="entry name" value="LpxD"/>
</dbReference>
<dbReference type="InterPro" id="IPR011004">
    <property type="entry name" value="Trimer_LpxA-like_sf"/>
</dbReference>
<dbReference type="InterPro" id="IPR020573">
    <property type="entry name" value="UDP_GlcNAc_AcTrfase_non-rep"/>
</dbReference>
<dbReference type="NCBIfam" id="TIGR01853">
    <property type="entry name" value="lipid_A_lpxD"/>
    <property type="match status" value="1"/>
</dbReference>
<dbReference type="NCBIfam" id="NF002060">
    <property type="entry name" value="PRK00892.1"/>
    <property type="match status" value="1"/>
</dbReference>
<dbReference type="PANTHER" id="PTHR43378">
    <property type="entry name" value="UDP-3-O-ACYLGLUCOSAMINE N-ACYLTRANSFERASE"/>
    <property type="match status" value="1"/>
</dbReference>
<dbReference type="PANTHER" id="PTHR43378:SF2">
    <property type="entry name" value="UDP-3-O-ACYLGLUCOSAMINE N-ACYLTRANSFERASE 1, MITOCHONDRIAL-RELATED"/>
    <property type="match status" value="1"/>
</dbReference>
<dbReference type="Pfam" id="PF00132">
    <property type="entry name" value="Hexapep"/>
    <property type="match status" value="1"/>
</dbReference>
<dbReference type="Pfam" id="PF04613">
    <property type="entry name" value="LpxD"/>
    <property type="match status" value="1"/>
</dbReference>
<dbReference type="SUPFAM" id="SSF51161">
    <property type="entry name" value="Trimeric LpxA-like enzymes"/>
    <property type="match status" value="1"/>
</dbReference>
<reference key="1">
    <citation type="journal article" date="2007" name="DNA Res.">
        <title>Complete genomic structure of the bloom-forming toxic cyanobacterium Microcystis aeruginosa NIES-843.</title>
        <authorList>
            <person name="Kaneko T."/>
            <person name="Nakajima N."/>
            <person name="Okamoto S."/>
            <person name="Suzuki I."/>
            <person name="Tanabe Y."/>
            <person name="Tamaoki M."/>
            <person name="Nakamura Y."/>
            <person name="Kasai F."/>
            <person name="Watanabe A."/>
            <person name="Kawashima K."/>
            <person name="Kishida Y."/>
            <person name="Ono A."/>
            <person name="Shimizu Y."/>
            <person name="Takahashi C."/>
            <person name="Minami C."/>
            <person name="Fujishiro T."/>
            <person name="Kohara M."/>
            <person name="Katoh M."/>
            <person name="Nakazaki N."/>
            <person name="Nakayama S."/>
            <person name="Yamada M."/>
            <person name="Tabata S."/>
            <person name="Watanabe M.M."/>
        </authorList>
    </citation>
    <scope>NUCLEOTIDE SEQUENCE [LARGE SCALE GENOMIC DNA]</scope>
    <source>
        <strain>NIES-843 / IAM M-247</strain>
    </source>
</reference>
<evidence type="ECO:0000255" key="1">
    <source>
        <dbReference type="HAMAP-Rule" id="MF_00523"/>
    </source>
</evidence>
<keyword id="KW-0012">Acyltransferase</keyword>
<keyword id="KW-0441">Lipid A biosynthesis</keyword>
<keyword id="KW-0444">Lipid biosynthesis</keyword>
<keyword id="KW-0443">Lipid metabolism</keyword>
<keyword id="KW-0677">Repeat</keyword>
<keyword id="KW-0808">Transferase</keyword>
<organism>
    <name type="scientific">Microcystis aeruginosa (strain NIES-843 / IAM M-2473)</name>
    <dbReference type="NCBI Taxonomy" id="449447"/>
    <lineage>
        <taxon>Bacteria</taxon>
        <taxon>Bacillati</taxon>
        <taxon>Cyanobacteriota</taxon>
        <taxon>Cyanophyceae</taxon>
        <taxon>Oscillatoriophycideae</taxon>
        <taxon>Chroococcales</taxon>
        <taxon>Microcystaceae</taxon>
        <taxon>Microcystis</taxon>
    </lineage>
</organism>
<feature type="chain" id="PRO_1000081689" description="UDP-3-O-acylglucosamine N-acyltransferase">
    <location>
        <begin position="1"/>
        <end position="343"/>
    </location>
</feature>
<feature type="active site" description="Proton acceptor" evidence="1">
    <location>
        <position position="248"/>
    </location>
</feature>
<accession>B0JUA2</accession>
<proteinExistence type="inferred from homology"/>
<gene>
    <name evidence="1" type="primary">lpxD</name>
    <name type="ordered locus">MAE_14680</name>
</gene>
<name>LPXD_MICAN</name>
<protein>
    <recommendedName>
        <fullName evidence="1">UDP-3-O-acylglucosamine N-acyltransferase</fullName>
        <ecNumber evidence="1">2.3.1.191</ecNumber>
    </recommendedName>
</protein>
<sequence>MKFSEIAQKLSPLVQSQSLTAYPDRNPQIKAITPIETALVDTISYIEGGKFASFVAKTDATALILPLDSNLQQQADERGIAWLASANPRLLFAHAIKLFYQPFQPQPYIHATAVVHPSAKIGHKVAIGAHAVVEANVTLGDGVCIHPNAVIYPGVHIGDRTILHANCTIHERVQIGNDCVIHSGAVIGAEGFGFVPVPEGWFKMEQSGIVVLEDGVEIGCNSTVDRPAVGETRIGSQTKIDNLVHIAHNCQIGQACALAGQVGMAGGVKLGNRVILAGQVGIANQAAIGDGAIATAQTGIHNDIGAGEVVSGSPAMPHKLFLKVAAAYKRLPEIYQAVKQLKK</sequence>